<dbReference type="EC" id="4.1.99.17" evidence="1"/>
<dbReference type="EMBL" id="FM954972">
    <property type="protein sequence ID" value="CAV20365.1"/>
    <property type="molecule type" value="Genomic_DNA"/>
</dbReference>
<dbReference type="SMR" id="B7VMV7"/>
<dbReference type="STRING" id="575788.VS_3098"/>
<dbReference type="KEGG" id="vsp:VS_3098"/>
<dbReference type="PATRIC" id="fig|575788.5.peg.4274"/>
<dbReference type="eggNOG" id="COG0422">
    <property type="taxonomic scope" value="Bacteria"/>
</dbReference>
<dbReference type="HOGENOM" id="CLU_013181_2_1_6"/>
<dbReference type="UniPathway" id="UPA00060"/>
<dbReference type="Proteomes" id="UP000009100">
    <property type="component" value="Chromosome 1"/>
</dbReference>
<dbReference type="GO" id="GO:0005829">
    <property type="term" value="C:cytosol"/>
    <property type="evidence" value="ECO:0007669"/>
    <property type="project" value="TreeGrafter"/>
</dbReference>
<dbReference type="GO" id="GO:0051539">
    <property type="term" value="F:4 iron, 4 sulfur cluster binding"/>
    <property type="evidence" value="ECO:0007669"/>
    <property type="project" value="UniProtKB-KW"/>
</dbReference>
<dbReference type="GO" id="GO:0016830">
    <property type="term" value="F:carbon-carbon lyase activity"/>
    <property type="evidence" value="ECO:0007669"/>
    <property type="project" value="InterPro"/>
</dbReference>
<dbReference type="GO" id="GO:0008270">
    <property type="term" value="F:zinc ion binding"/>
    <property type="evidence" value="ECO:0007669"/>
    <property type="project" value="UniProtKB-UniRule"/>
</dbReference>
<dbReference type="GO" id="GO:0009228">
    <property type="term" value="P:thiamine biosynthetic process"/>
    <property type="evidence" value="ECO:0007669"/>
    <property type="project" value="UniProtKB-KW"/>
</dbReference>
<dbReference type="GO" id="GO:0009229">
    <property type="term" value="P:thiamine diphosphate biosynthetic process"/>
    <property type="evidence" value="ECO:0007669"/>
    <property type="project" value="UniProtKB-UniRule"/>
</dbReference>
<dbReference type="FunFam" id="3.20.20.540:FF:000001">
    <property type="entry name" value="Phosphomethylpyrimidine synthase"/>
    <property type="match status" value="1"/>
</dbReference>
<dbReference type="Gene3D" id="6.10.250.620">
    <property type="match status" value="1"/>
</dbReference>
<dbReference type="Gene3D" id="3.20.20.540">
    <property type="entry name" value="Radical SAM ThiC family, central domain"/>
    <property type="match status" value="1"/>
</dbReference>
<dbReference type="HAMAP" id="MF_00089">
    <property type="entry name" value="ThiC"/>
    <property type="match status" value="1"/>
</dbReference>
<dbReference type="InterPro" id="IPR037509">
    <property type="entry name" value="ThiC"/>
</dbReference>
<dbReference type="InterPro" id="IPR025747">
    <property type="entry name" value="ThiC-associated_dom"/>
</dbReference>
<dbReference type="InterPro" id="IPR038521">
    <property type="entry name" value="ThiC/Bza_core_dom"/>
</dbReference>
<dbReference type="InterPro" id="IPR002817">
    <property type="entry name" value="ThiC/BzaA/B"/>
</dbReference>
<dbReference type="NCBIfam" id="NF006763">
    <property type="entry name" value="PRK09284.1"/>
    <property type="match status" value="1"/>
</dbReference>
<dbReference type="NCBIfam" id="NF009895">
    <property type="entry name" value="PRK13352.1"/>
    <property type="match status" value="1"/>
</dbReference>
<dbReference type="NCBIfam" id="TIGR00190">
    <property type="entry name" value="thiC"/>
    <property type="match status" value="1"/>
</dbReference>
<dbReference type="PANTHER" id="PTHR30557:SF1">
    <property type="entry name" value="PHOSPHOMETHYLPYRIMIDINE SYNTHASE, CHLOROPLASTIC"/>
    <property type="match status" value="1"/>
</dbReference>
<dbReference type="PANTHER" id="PTHR30557">
    <property type="entry name" value="THIAMINE BIOSYNTHESIS PROTEIN THIC"/>
    <property type="match status" value="1"/>
</dbReference>
<dbReference type="Pfam" id="PF13667">
    <property type="entry name" value="ThiC-associated"/>
    <property type="match status" value="1"/>
</dbReference>
<dbReference type="Pfam" id="PF01964">
    <property type="entry name" value="ThiC_Rad_SAM"/>
    <property type="match status" value="1"/>
</dbReference>
<dbReference type="SFLD" id="SFLDF00407">
    <property type="entry name" value="phosphomethylpyrimidine_syntha"/>
    <property type="match status" value="1"/>
</dbReference>
<dbReference type="SFLD" id="SFLDG01114">
    <property type="entry name" value="phosphomethylpyrimidine_syntha"/>
    <property type="match status" value="1"/>
</dbReference>
<dbReference type="SFLD" id="SFLDS00113">
    <property type="entry name" value="Radical_SAM_Phosphomethylpyrim"/>
    <property type="match status" value="1"/>
</dbReference>
<evidence type="ECO:0000255" key="1">
    <source>
        <dbReference type="HAMAP-Rule" id="MF_00089"/>
    </source>
</evidence>
<evidence type="ECO:0000256" key="2">
    <source>
        <dbReference type="SAM" id="MobiDB-lite"/>
    </source>
</evidence>
<protein>
    <recommendedName>
        <fullName evidence="1">Phosphomethylpyrimidine synthase</fullName>
        <ecNumber evidence="1">4.1.99.17</ecNumber>
    </recommendedName>
    <alternativeName>
        <fullName evidence="1">Hydroxymethylpyrimidine phosphate synthase</fullName>
        <shortName evidence="1">HMP-P synthase</shortName>
        <shortName evidence="1">HMP-phosphate synthase</shortName>
        <shortName evidence="1">HMPP synthase</shortName>
    </alternativeName>
    <alternativeName>
        <fullName evidence="1">Thiamine biosynthesis protein ThiC</fullName>
    </alternativeName>
</protein>
<organism>
    <name type="scientific">Vibrio atlanticus (strain LGP32)</name>
    <name type="common">Vibrio splendidus (strain Mel32)</name>
    <dbReference type="NCBI Taxonomy" id="575788"/>
    <lineage>
        <taxon>Bacteria</taxon>
        <taxon>Pseudomonadati</taxon>
        <taxon>Pseudomonadota</taxon>
        <taxon>Gammaproteobacteria</taxon>
        <taxon>Vibrionales</taxon>
        <taxon>Vibrionaceae</taxon>
        <taxon>Vibrio</taxon>
    </lineage>
</organism>
<name>THIC_VIBA3</name>
<keyword id="KW-0004">4Fe-4S</keyword>
<keyword id="KW-0408">Iron</keyword>
<keyword id="KW-0411">Iron-sulfur</keyword>
<keyword id="KW-0456">Lyase</keyword>
<keyword id="KW-0479">Metal-binding</keyword>
<keyword id="KW-0949">S-adenosyl-L-methionine</keyword>
<keyword id="KW-0784">Thiamine biosynthesis</keyword>
<keyword id="KW-0862">Zinc</keyword>
<sequence>MSSRKQARLEAKNFIDSLSVQPYPNSKKAYIQGSREDIQVPVREISLADSLVGGTKKEPVFEPNVPIQVYDTSGVYTDPTHQIDLYSGLPKLREQWIDERGDTELLDDVSSVYTKERLEDETLDDLRYGNLPRIRRATDEQCVTQLHYARQGIITPEMEYIAIRENMGRQKFADEQLNHQHPGHNFGANLPKEITPEFVRKEVAEGRAIIPSNINHPESEPMIIGRNFLVKVNANIGNSSVSSSIEEEVEKLVWSTRWGGDTVMDLSTGRNIHETREWILRNSPVPIGTVPMYQALEKVNGVAEDLNWEVMRDTLIEQAEQGVDYFTIHAGLLLRYVPMTAKRVTGIVSRGGSIIAKWCLAHHQESFLYTHFREICEICAKYDVALSLGDGLRPGSIADANDEAQFSELRTLGELTKVAWEYDVQVIIEGPGHVPMHLIKENMDEQLEHCHEAPFYTLGPLTTDIAPGYDHITSGIGAAMIGWYGCAMLCYVTPKEHLGLPNKEDVKTGLITYKLAAHAADLAKGHPGAQIRDNALSKARFEFRWEDQFNLALDPETARSFHDETLPQESGKVAHFCSMCGPKFCSMKISQEVREYAKDTEQVAADQAIEIKMLDNPLEGMRQKSQEFRDTGSELYHPAVGAKEAQLEE</sequence>
<gene>
    <name evidence="1" type="primary">thiC</name>
    <name type="ordered locus">VS_3098</name>
</gene>
<comment type="function">
    <text evidence="1">Catalyzes the synthesis of the hydroxymethylpyrimidine phosphate (HMP-P) moiety of thiamine from aminoimidazole ribotide (AIR) in a radical S-adenosyl-L-methionine (SAM)-dependent reaction.</text>
</comment>
<comment type="catalytic activity">
    <reaction evidence="1">
        <text>5-amino-1-(5-phospho-beta-D-ribosyl)imidazole + S-adenosyl-L-methionine = 4-amino-2-methyl-5-(phosphooxymethyl)pyrimidine + CO + 5'-deoxyadenosine + formate + L-methionine + 3 H(+)</text>
        <dbReference type="Rhea" id="RHEA:24840"/>
        <dbReference type="ChEBI" id="CHEBI:15378"/>
        <dbReference type="ChEBI" id="CHEBI:15740"/>
        <dbReference type="ChEBI" id="CHEBI:17245"/>
        <dbReference type="ChEBI" id="CHEBI:17319"/>
        <dbReference type="ChEBI" id="CHEBI:57844"/>
        <dbReference type="ChEBI" id="CHEBI:58354"/>
        <dbReference type="ChEBI" id="CHEBI:59789"/>
        <dbReference type="ChEBI" id="CHEBI:137981"/>
        <dbReference type="EC" id="4.1.99.17"/>
    </reaction>
</comment>
<comment type="cofactor">
    <cofactor evidence="1">
        <name>[4Fe-4S] cluster</name>
        <dbReference type="ChEBI" id="CHEBI:49883"/>
    </cofactor>
    <text evidence="1">Binds 1 [4Fe-4S] cluster per subunit. The cluster is coordinated with 3 cysteines and an exchangeable S-adenosyl-L-methionine.</text>
</comment>
<comment type="pathway">
    <text evidence="1">Cofactor biosynthesis; thiamine diphosphate biosynthesis.</text>
</comment>
<comment type="subunit">
    <text evidence="1">Homodimer.</text>
</comment>
<comment type="similarity">
    <text evidence="1">Belongs to the ThiC family.</text>
</comment>
<reference key="1">
    <citation type="submission" date="2009-02" db="EMBL/GenBank/DDBJ databases">
        <title>Vibrio splendidus str. LGP32 complete genome.</title>
        <authorList>
            <person name="Mazel D."/>
            <person name="Le Roux F."/>
        </authorList>
    </citation>
    <scope>NUCLEOTIDE SEQUENCE [LARGE SCALE GENOMIC DNA]</scope>
    <source>
        <strain>LGP32</strain>
    </source>
</reference>
<accession>B7VMV7</accession>
<proteinExistence type="inferred from homology"/>
<feature type="chain" id="PRO_1000198068" description="Phosphomethylpyrimidine synthase">
    <location>
        <begin position="1"/>
        <end position="649"/>
    </location>
</feature>
<feature type="region of interest" description="Disordered" evidence="2">
    <location>
        <begin position="620"/>
        <end position="649"/>
    </location>
</feature>
<feature type="compositionally biased region" description="Basic and acidic residues" evidence="2">
    <location>
        <begin position="621"/>
        <end position="632"/>
    </location>
</feature>
<feature type="binding site" evidence="1">
    <location>
        <position position="235"/>
    </location>
    <ligand>
        <name>substrate</name>
    </ligand>
</feature>
<feature type="binding site" evidence="1">
    <location>
        <position position="264"/>
    </location>
    <ligand>
        <name>substrate</name>
    </ligand>
</feature>
<feature type="binding site" evidence="1">
    <location>
        <position position="293"/>
    </location>
    <ligand>
        <name>substrate</name>
    </ligand>
</feature>
<feature type="binding site" evidence="1">
    <location>
        <position position="329"/>
    </location>
    <ligand>
        <name>substrate</name>
    </ligand>
</feature>
<feature type="binding site" evidence="1">
    <location>
        <begin position="349"/>
        <end position="351"/>
    </location>
    <ligand>
        <name>substrate</name>
    </ligand>
</feature>
<feature type="binding site" evidence="1">
    <location>
        <begin position="390"/>
        <end position="393"/>
    </location>
    <ligand>
        <name>substrate</name>
    </ligand>
</feature>
<feature type="binding site" evidence="1">
    <location>
        <position position="429"/>
    </location>
    <ligand>
        <name>substrate</name>
    </ligand>
</feature>
<feature type="binding site" evidence="1">
    <location>
        <position position="433"/>
    </location>
    <ligand>
        <name>Zn(2+)</name>
        <dbReference type="ChEBI" id="CHEBI:29105"/>
    </ligand>
</feature>
<feature type="binding site" evidence="1">
    <location>
        <position position="456"/>
    </location>
    <ligand>
        <name>substrate</name>
    </ligand>
</feature>
<feature type="binding site" evidence="1">
    <location>
        <position position="497"/>
    </location>
    <ligand>
        <name>Zn(2+)</name>
        <dbReference type="ChEBI" id="CHEBI:29105"/>
    </ligand>
</feature>
<feature type="binding site" evidence="1">
    <location>
        <position position="577"/>
    </location>
    <ligand>
        <name>[4Fe-4S] cluster</name>
        <dbReference type="ChEBI" id="CHEBI:49883"/>
        <note>4Fe-4S-S-AdoMet</note>
    </ligand>
</feature>
<feature type="binding site" evidence="1">
    <location>
        <position position="580"/>
    </location>
    <ligand>
        <name>[4Fe-4S] cluster</name>
        <dbReference type="ChEBI" id="CHEBI:49883"/>
        <note>4Fe-4S-S-AdoMet</note>
    </ligand>
</feature>
<feature type="binding site" evidence="1">
    <location>
        <position position="585"/>
    </location>
    <ligand>
        <name>[4Fe-4S] cluster</name>
        <dbReference type="ChEBI" id="CHEBI:49883"/>
        <note>4Fe-4S-S-AdoMet</note>
    </ligand>
</feature>